<gene>
    <name evidence="5" type="primary">AMT14</name>
</gene>
<dbReference type="EMBL" id="AB525198">
    <property type="protein sequence ID" value="BAI44750.1"/>
    <property type="molecule type" value="Genomic_DNA"/>
</dbReference>
<dbReference type="EMBL" id="AB525199">
    <property type="protein sequence ID" value="BAI44775.1"/>
    <property type="molecule type" value="Genomic_DNA"/>
</dbReference>
<dbReference type="GO" id="GO:0016020">
    <property type="term" value="C:membrane"/>
    <property type="evidence" value="ECO:0007669"/>
    <property type="project" value="UniProtKB-SubCell"/>
</dbReference>
<accession>C9K7C6</accession>
<protein>
    <recommendedName>
        <fullName evidence="5">AM-toxin biosynthesis protein 14</fullName>
    </recommendedName>
</protein>
<sequence length="293" mass="32983">MPASDPRRLRSPLNPSIHSPFVIRQLPFEMDFSATASLPIGFSSLFLLTEVYIRHVESSRRRDISLLSNCWYIAVNTGLWICCLVLSIVALVLRIEAVSLSSCQLAWMQAAVLKASDAQLWQPSADQLQVYHLRILLFLPGESSWPYGVLALVLTACLQCAAAGLCVWDAAPGLTPHLTRSALVPILHVGWGLHYTVFLLWILRICSLKGNDLRHIWKWRVWCLLVAPLFISALVGATPLTLWYPPKITFLFWCRKQQMRWRMLGERGAVQSLRSVSSTVRAQPTSHPYPAAL</sequence>
<name>AMT14_ALTAL</name>
<proteinExistence type="evidence at transcript level"/>
<comment type="function">
    <text evidence="2 3 4 6 7 8">Part of the gene clusters that mediate the biosynthesis of AM-toxins, host-selective toxins (HSTs) causing Alternaria blotch on apple, a worldwide distributed disease (Probable). AM-toxins are cyclic depsipeptides containing the 3 residues 2-hydroxy-isovaleric acid (2-HIV), dehydroalanine, L-alanine which are common for all 3 AM-toxins I to III. The fourth precursor is L-alpha-amino-methoxyphenyl-valeric acid (L-Amv) for AM-toxin I, L-alpha-amino-phenyl-valeric acid (L-Apv) for AM-toxin II, and L-alpha-amino-hydroxyphenyl-valeric acid (L-Ahv) for AM-toxin III (Probable). AM-toxins have two target sites for affecting susceptible apple cells; they cause invagination of the plasma membrane and electrolyte loss and chloroplast disorganization (PubMed:22846083). The non-ribosomal peptide synthetase AMT1 contains 4 catalytic modules and is responsible for activation of each residue in AM-toxin (PubMed:10875335). The aldo-keto reductase AMT2 catalyzes the conversion of 2-keto-isovaleric acid (2-KIV) to 2-hydroxy-isovaleric acid (2-HIV), one of the precursor residues incorporated by AMT1 during AM-toxin biosynthesis, by reduction of its ketone to an alcohol (PubMed:15066029). The cytochrome P450 monooxygenase AMT3 and the thioesterase AMT4 are also important for AM-toxin production, but their exact function within the AM-toxin biosynthesis are not known yet (PubMed:17990954). Up to 21 proteins (including AMT1 to AMT4) are predicted to be involved in AM-toxin biosynthesis since their expression ishighly up-regulated in AM-toxin-producing cultures (PubMed:17990954).</text>
</comment>
<comment type="pathway">
    <text evidence="8">Mycotoxin biosynthesis.</text>
</comment>
<comment type="subcellular location">
    <subcellularLocation>
        <location evidence="1">Membrane</location>
        <topology evidence="1">Multi-pass membrane protein</topology>
    </subcellularLocation>
</comment>
<comment type="induction">
    <text evidence="4">Expression is up-regulated more than 10 fold in toxin producing cultures.</text>
</comment>
<comment type="miscellaneous">
    <text evidence="4">Gene clusters encoding host-selective toxins (HSTs) are localized on conditionally dispensable chromosomes (CDCs), also called supernumerary chromosomes, where they are present in multiple copies (PubMed:17990954). The CDCs are not essential for saprophytic growth but controls host-selective pathogenicity (PubMed:17990954).</text>
</comment>
<organism>
    <name type="scientific">Alternaria alternata</name>
    <name type="common">Alternaria rot fungus</name>
    <name type="synonym">Torula alternata</name>
    <dbReference type="NCBI Taxonomy" id="5599"/>
    <lineage>
        <taxon>Eukaryota</taxon>
        <taxon>Fungi</taxon>
        <taxon>Dikarya</taxon>
        <taxon>Ascomycota</taxon>
        <taxon>Pezizomycotina</taxon>
        <taxon>Dothideomycetes</taxon>
        <taxon>Pleosporomycetidae</taxon>
        <taxon>Pleosporales</taxon>
        <taxon>Pleosporineae</taxon>
        <taxon>Pleosporaceae</taxon>
        <taxon>Alternaria</taxon>
        <taxon>Alternaria sect. Alternaria</taxon>
        <taxon>Alternaria alternata complex</taxon>
    </lineage>
</organism>
<feature type="chain" id="PRO_0000444848" description="AM-toxin biosynthesis protein 14">
    <location>
        <begin position="1"/>
        <end position="293"/>
    </location>
</feature>
<feature type="transmembrane region" description="Helical" evidence="1">
    <location>
        <begin position="33"/>
        <end position="53"/>
    </location>
</feature>
<feature type="transmembrane region" description="Helical" evidence="1">
    <location>
        <begin position="73"/>
        <end position="93"/>
    </location>
</feature>
<feature type="transmembrane region" description="Helical" evidence="1">
    <location>
        <begin position="148"/>
        <end position="168"/>
    </location>
</feature>
<feature type="transmembrane region" description="Helical" evidence="1">
    <location>
        <begin position="183"/>
        <end position="203"/>
    </location>
</feature>
<feature type="transmembrane region" description="Helical" evidence="1">
    <location>
        <begin position="221"/>
        <end position="241"/>
    </location>
</feature>
<keyword id="KW-0472">Membrane</keyword>
<keyword id="KW-0812">Transmembrane</keyword>
<keyword id="KW-1133">Transmembrane helix</keyword>
<keyword id="KW-0843">Virulence</keyword>
<evidence type="ECO:0000255" key="1"/>
<evidence type="ECO:0000269" key="2">
    <source>
    </source>
</evidence>
<evidence type="ECO:0000269" key="3">
    <source>
    </source>
</evidence>
<evidence type="ECO:0000269" key="4">
    <source>
    </source>
</evidence>
<evidence type="ECO:0000303" key="5">
    <source>
    </source>
</evidence>
<evidence type="ECO:0000303" key="6">
    <source>
    </source>
</evidence>
<evidence type="ECO:0000305" key="7">
    <source>
    </source>
</evidence>
<evidence type="ECO:0000305" key="8">
    <source>
    </source>
</evidence>
<reference key="1">
    <citation type="journal article" date="2007" name="Mol. Plant Microbe Interact.">
        <title>Expression profiles of genes encoded by the supernumerary chromosome controlling AM-toxin biosynthesis and pathogenicity in the apple pathotype of Alternaria alternata.</title>
        <authorList>
            <person name="Harimoto Y."/>
            <person name="Hatta R."/>
            <person name="Kodama M."/>
            <person name="Yamamoto M."/>
            <person name="Otani H."/>
            <person name="Tsuge T."/>
        </authorList>
    </citation>
    <scope>NUCLEOTIDE SEQUENCE [GENOMIC DNA]</scope>
    <scope>INDUCTION</scope>
    <scope>PATHWAY</scope>
    <source>
        <strain>NBRC 8984</strain>
    </source>
</reference>
<reference key="2">
    <citation type="journal article" date="2000" name="Mol. Plant Microbe Interact.">
        <title>Cloning and characterization of a cyclic peptide synthetase gene from Alternaria alternata apple pathotype whose product is involved in AM-toxin synthesis and pathogenicity.</title>
        <authorList>
            <person name="Johnson R.D."/>
            <person name="Johnson L."/>
            <person name="Itoh Y."/>
            <person name="Kodama M."/>
            <person name="Otani H."/>
            <person name="Kohmoto K."/>
        </authorList>
    </citation>
    <scope>FUNCTION</scope>
    <source>
        <strain>M-71</strain>
    </source>
</reference>
<reference key="3">
    <citation type="journal article" date="2004" name="Mol. Microbiol.">
        <title>Dissection of the host range of the fungal plant pathogen Alternaria alternata by modification of secondary metabolism.</title>
        <authorList>
            <person name="Ito K."/>
            <person name="Tanaka T."/>
            <person name="Hatta R."/>
            <person name="Yamamoto M."/>
            <person name="Akimitsu K."/>
            <person name="Tsuge T."/>
        </authorList>
    </citation>
    <scope>FUNCTION</scope>
    <source>
        <strain>NBRC 8984</strain>
    </source>
</reference>
<reference key="4">
    <citation type="journal article" date="2013" name="FEMS Microbiol. Rev.">
        <title>Host-selective toxins produced by the plant pathogenic fungus Alternaria alternata.</title>
        <authorList>
            <person name="Tsuge T."/>
            <person name="Harimoto Y."/>
            <person name="Akimitsu K."/>
            <person name="Ohtani K."/>
            <person name="Kodama M."/>
            <person name="Akagi Y."/>
            <person name="Egusa M."/>
            <person name="Yamamoto M."/>
            <person name="Otani H."/>
        </authorList>
    </citation>
    <scope>REVIEW ON HOST-SELECTIVE TOXINS</scope>
</reference>